<accession>Q65GP2</accession>
<accession>Q62S50</accession>
<proteinExistence type="inferred from homology"/>
<sequence length="59" mass="6853">MNTQRAQEIVESPDMVDVTYNGRPIYIQRVDEQNETARIFPLGQPENEQEVPLANLKEH</sequence>
<organism>
    <name type="scientific">Bacillus licheniformis (strain ATCC 14580 / DSM 13 / JCM 2505 / CCUG 7422 / NBRC 12200 / NCIMB 9375 / NCTC 10341 / NRRL NRS-1264 / Gibson 46)</name>
    <dbReference type="NCBI Taxonomy" id="279010"/>
    <lineage>
        <taxon>Bacteria</taxon>
        <taxon>Bacillati</taxon>
        <taxon>Bacillota</taxon>
        <taxon>Bacilli</taxon>
        <taxon>Bacillales</taxon>
        <taxon>Bacillaceae</taxon>
        <taxon>Bacillus</taxon>
    </lineage>
</organism>
<comment type="subcellular location">
    <subcellularLocation>
        <location evidence="1">Spore core</location>
    </subcellularLocation>
</comment>
<comment type="induction">
    <text evidence="1">Expressed only in the forespore compartment of sporulating cells.</text>
</comment>
<comment type="similarity">
    <text evidence="1">Belongs to the SspH family.</text>
</comment>
<reference key="1">
    <citation type="journal article" date="2004" name="J. Mol. Microbiol. Biotechnol.">
        <title>The complete genome sequence of Bacillus licheniformis DSM13, an organism with great industrial potential.</title>
        <authorList>
            <person name="Veith B."/>
            <person name="Herzberg C."/>
            <person name="Steckel S."/>
            <person name="Feesche J."/>
            <person name="Maurer K.H."/>
            <person name="Ehrenreich P."/>
            <person name="Baeumer S."/>
            <person name="Henne A."/>
            <person name="Liesegang H."/>
            <person name="Merkl R."/>
            <person name="Ehrenreich A."/>
            <person name="Gottschalk G."/>
        </authorList>
    </citation>
    <scope>NUCLEOTIDE SEQUENCE [LARGE SCALE GENOMIC DNA]</scope>
    <source>
        <strain>ATCC 14580 / DSM 13 / JCM 2505 / CCUG 7422 / NBRC 12200 / NCIMB 9375 / NCTC 10341 / NRRL NRS-1264 / Gibson 46</strain>
    </source>
</reference>
<reference key="2">
    <citation type="journal article" date="2004" name="Genome Biol.">
        <title>Complete genome sequence of the industrial bacterium Bacillus licheniformis and comparisons with closely related Bacillus species.</title>
        <authorList>
            <person name="Rey M.W."/>
            <person name="Ramaiya P."/>
            <person name="Nelson B.A."/>
            <person name="Brody-Karpin S.D."/>
            <person name="Zaretsky E.J."/>
            <person name="Tang M."/>
            <person name="Lopez de Leon A."/>
            <person name="Xiang H."/>
            <person name="Gusti V."/>
            <person name="Clausen I.G."/>
            <person name="Olsen P.B."/>
            <person name="Rasmussen M.D."/>
            <person name="Andersen J.T."/>
            <person name="Joergensen P.L."/>
            <person name="Larsen T.S."/>
            <person name="Sorokin A."/>
            <person name="Bolotin A."/>
            <person name="Lapidus A."/>
            <person name="Galleron N."/>
            <person name="Ehrlich S.D."/>
            <person name="Berka R.M."/>
        </authorList>
    </citation>
    <scope>NUCLEOTIDE SEQUENCE [LARGE SCALE GENOMIC DNA]</scope>
    <source>
        <strain>ATCC 14580 / DSM 13 / JCM 2505 / CCUG 7422 / NBRC 12200 / NCIMB 9375 / NCTC 10341 / NRRL NRS-1264 / Gibson 46</strain>
    </source>
</reference>
<gene>
    <name evidence="1" type="primary">sspH</name>
    <name type="ordered locus">BLi02904</name>
    <name type="ordered locus">BL01146</name>
</gene>
<keyword id="KW-1185">Reference proteome</keyword>
<keyword id="KW-0749">Sporulation</keyword>
<dbReference type="EMBL" id="AE017333">
    <property type="protein sequence ID" value="AAU41772.1"/>
    <property type="molecule type" value="Genomic_DNA"/>
</dbReference>
<dbReference type="EMBL" id="CP000002">
    <property type="protein sequence ID" value="AAU24410.1"/>
    <property type="molecule type" value="Genomic_DNA"/>
</dbReference>
<dbReference type="RefSeq" id="WP_003183990.1">
    <property type="nucleotide sequence ID" value="NC_006322.1"/>
</dbReference>
<dbReference type="SMR" id="Q65GP2"/>
<dbReference type="STRING" id="279010.BL01146"/>
<dbReference type="KEGG" id="bld:BLi02904"/>
<dbReference type="KEGG" id="bli:BL01146"/>
<dbReference type="eggNOG" id="ENOG5033AUF">
    <property type="taxonomic scope" value="Bacteria"/>
</dbReference>
<dbReference type="HOGENOM" id="CLU_191960_2_1_9"/>
<dbReference type="Proteomes" id="UP000000606">
    <property type="component" value="Chromosome"/>
</dbReference>
<dbReference type="Bgee" id="BL01146">
    <property type="expression patterns" value="Expressed in primary dorsal nerve cord and 1 other cell type or tissue"/>
</dbReference>
<dbReference type="GO" id="GO:0042601">
    <property type="term" value="C:endospore-forming forespore"/>
    <property type="evidence" value="ECO:0007669"/>
    <property type="project" value="InterPro"/>
</dbReference>
<dbReference type="GO" id="GO:0030436">
    <property type="term" value="P:asexual sporulation"/>
    <property type="evidence" value="ECO:0007669"/>
    <property type="project" value="UniProtKB-UniRule"/>
</dbReference>
<dbReference type="GO" id="GO:0030435">
    <property type="term" value="P:sporulation resulting in formation of a cellular spore"/>
    <property type="evidence" value="ECO:0007669"/>
    <property type="project" value="UniProtKB-KW"/>
</dbReference>
<dbReference type="HAMAP" id="MF_00667">
    <property type="entry name" value="SspH"/>
    <property type="match status" value="1"/>
</dbReference>
<dbReference type="InterPro" id="IPR012610">
    <property type="entry name" value="SASP_SspH"/>
</dbReference>
<dbReference type="NCBIfam" id="NF002867">
    <property type="entry name" value="PRK03174.1"/>
    <property type="match status" value="1"/>
</dbReference>
<dbReference type="NCBIfam" id="TIGR02861">
    <property type="entry name" value="SASP_H"/>
    <property type="match status" value="1"/>
</dbReference>
<dbReference type="Pfam" id="PF08141">
    <property type="entry name" value="SspH"/>
    <property type="match status" value="1"/>
</dbReference>
<feature type="chain" id="PRO_0000162319" description="Small, acid-soluble spore protein H">
    <location>
        <begin position="1"/>
        <end position="59"/>
    </location>
</feature>
<protein>
    <recommendedName>
        <fullName evidence="1">Small, acid-soluble spore protein H</fullName>
        <shortName evidence="1">SASP H</shortName>
    </recommendedName>
</protein>
<name>SSPH_BACLD</name>
<evidence type="ECO:0000255" key="1">
    <source>
        <dbReference type="HAMAP-Rule" id="MF_00667"/>
    </source>
</evidence>